<accession>B8NIM7</accession>
<reference key="1">
    <citation type="journal article" date="2015" name="Genome Announc.">
        <title>Genome sequence of Aspergillus flavus NRRL 3357, a strain that causes aflatoxin contamination of food and feed.</title>
        <authorList>
            <person name="Nierman W.C."/>
            <person name="Yu J."/>
            <person name="Fedorova-Abrams N.D."/>
            <person name="Losada L."/>
            <person name="Cleveland T.E."/>
            <person name="Bhatnagar D."/>
            <person name="Bennett J.W."/>
            <person name="Dean R."/>
            <person name="Payne G.A."/>
        </authorList>
    </citation>
    <scope>NUCLEOTIDE SEQUENCE [LARGE SCALE GENOMIC DNA]</scope>
    <source>
        <strain>ATCC 200026 / FGSC A1120 / IAM 13836 / NRRL 3357 / JCM 12722 / SRRC 167</strain>
    </source>
</reference>
<proteinExistence type="inferred from homology"/>
<gene>
    <name type="primary">qutD</name>
    <name type="ORF">AFLA_068140</name>
</gene>
<protein>
    <recommendedName>
        <fullName>Probable quinate permease</fullName>
    </recommendedName>
    <alternativeName>
        <fullName>Quinate transporter</fullName>
    </alternativeName>
</protein>
<evidence type="ECO:0000250" key="1"/>
<evidence type="ECO:0000255" key="2"/>
<evidence type="ECO:0000305" key="3"/>
<dbReference type="EMBL" id="EQ963479">
    <property type="protein sequence ID" value="EED49992.1"/>
    <property type="molecule type" value="Genomic_DNA"/>
</dbReference>
<dbReference type="RefSeq" id="XP_002380373.1">
    <property type="nucleotide sequence ID" value="XM_002380332.1"/>
</dbReference>
<dbReference type="SMR" id="B8NIM7"/>
<dbReference type="STRING" id="332952.B8NIM7"/>
<dbReference type="EnsemblFungi" id="EED49992">
    <property type="protein sequence ID" value="EED49992"/>
    <property type="gene ID" value="AFLA_068140"/>
</dbReference>
<dbReference type="VEuPathDB" id="FungiDB:AFLA_008751"/>
<dbReference type="eggNOG" id="KOG0254">
    <property type="taxonomic scope" value="Eukaryota"/>
</dbReference>
<dbReference type="HOGENOM" id="CLU_001265_30_12_1"/>
<dbReference type="OMA" id="PADHIYM"/>
<dbReference type="GO" id="GO:0005886">
    <property type="term" value="C:plasma membrane"/>
    <property type="evidence" value="ECO:0007669"/>
    <property type="project" value="UniProtKB-SubCell"/>
</dbReference>
<dbReference type="GO" id="GO:0005351">
    <property type="term" value="F:carbohydrate:proton symporter activity"/>
    <property type="evidence" value="ECO:0007669"/>
    <property type="project" value="TreeGrafter"/>
</dbReference>
<dbReference type="GO" id="GO:0019630">
    <property type="term" value="P:quinate metabolic process"/>
    <property type="evidence" value="ECO:0007669"/>
    <property type="project" value="UniProtKB-KW"/>
</dbReference>
<dbReference type="FunFam" id="1.20.1250.20:FF:000026">
    <property type="entry name" value="MFS quinate transporter QutD"/>
    <property type="match status" value="1"/>
</dbReference>
<dbReference type="Gene3D" id="1.20.1250.20">
    <property type="entry name" value="MFS general substrate transporter like domains"/>
    <property type="match status" value="1"/>
</dbReference>
<dbReference type="InterPro" id="IPR020846">
    <property type="entry name" value="MFS_dom"/>
</dbReference>
<dbReference type="InterPro" id="IPR005828">
    <property type="entry name" value="MFS_sugar_transport-like"/>
</dbReference>
<dbReference type="InterPro" id="IPR050360">
    <property type="entry name" value="MFS_Sugar_Transporters"/>
</dbReference>
<dbReference type="InterPro" id="IPR036259">
    <property type="entry name" value="MFS_trans_sf"/>
</dbReference>
<dbReference type="InterPro" id="IPR003663">
    <property type="entry name" value="Sugar/inositol_transpt"/>
</dbReference>
<dbReference type="InterPro" id="IPR005829">
    <property type="entry name" value="Sugar_transporter_CS"/>
</dbReference>
<dbReference type="NCBIfam" id="TIGR00879">
    <property type="entry name" value="SP"/>
    <property type="match status" value="1"/>
</dbReference>
<dbReference type="PANTHER" id="PTHR48022:SF34">
    <property type="entry name" value="MAJOR FACILITATOR SUPERFAMILY (MFS) PROFILE DOMAIN-CONTAINING PROTEIN-RELATED"/>
    <property type="match status" value="1"/>
</dbReference>
<dbReference type="PANTHER" id="PTHR48022">
    <property type="entry name" value="PLASTIDIC GLUCOSE TRANSPORTER 4"/>
    <property type="match status" value="1"/>
</dbReference>
<dbReference type="Pfam" id="PF00083">
    <property type="entry name" value="Sugar_tr"/>
    <property type="match status" value="1"/>
</dbReference>
<dbReference type="PRINTS" id="PR00171">
    <property type="entry name" value="SUGRTRNSPORT"/>
</dbReference>
<dbReference type="SUPFAM" id="SSF103473">
    <property type="entry name" value="MFS general substrate transporter"/>
    <property type="match status" value="1"/>
</dbReference>
<dbReference type="PROSITE" id="PS50850">
    <property type="entry name" value="MFS"/>
    <property type="match status" value="1"/>
</dbReference>
<dbReference type="PROSITE" id="PS00216">
    <property type="entry name" value="SUGAR_TRANSPORT_1"/>
    <property type="match status" value="1"/>
</dbReference>
<dbReference type="PROSITE" id="PS00217">
    <property type="entry name" value="SUGAR_TRANSPORT_2"/>
    <property type="match status" value="1"/>
</dbReference>
<name>QUTD_ASPFN</name>
<sequence>MSILSLVEDRPTPKEVYNWKIYLLAAVASCTSCMIGYDSAFIGTTISLQSFKDEFDWDSMSAAHQDLVSSNIVSLYQAGAFFGAFFAYPIGHFWGRKWGLMVSALIFTLGAGIMLGTNGDRGFGLLYGGRVLAGLGVGAGSNITPIYISELSPPAIRGRLVGVYELGWQIGGLVGFWICYGVDETLPPSHKQWIIPFAVQLIPSGLLIIGALFLKESPRWLFLRGRREEAIKNLCWIRQLPEDHVYMIEEIGAIDQTLEHQRATIGLGFWKPFAAAWTNKKILYRLFLGSMLFFWQNGSGINAINYYSPTVFKSIGVTGSNTSLFTTGIFGVVKTVVTFIWLLWLIDRVGRRLLLLIGAAGGSICLWIVGAYIKIARPSERENKQMDGGGIAAMFFFYLWTVFYTPSWNGTPWVINSEMFDPNIRSLAQACAAGSNWLWNFLISRFTPQMFAKMDYGVYFFFASLMILSIIFVFFLIPETKGIPLESMDRLFETQPIWRAHGTLLKQIREDEERFRHDLEDSGFVKSTDRQVEVVDA</sequence>
<comment type="function">
    <text evidence="1">Integral membrane transporter that imports quinic acid to be catabolized as a carbon source.</text>
</comment>
<comment type="subunit">
    <text evidence="1">Interacts with creB.</text>
</comment>
<comment type="subcellular location">
    <subcellularLocation>
        <location>Cell membrane</location>
        <topology>Multi-pass membrane protein</topology>
    </subcellularLocation>
    <subcellularLocation>
        <location evidence="3">Cell membrane</location>
    </subcellularLocation>
</comment>
<comment type="PTM">
    <text>Ubiquitinated. Deubiquitinated by creB, probably to control its activity or amount.</text>
</comment>
<comment type="similarity">
    <text evidence="3">Belongs to the major facilitator superfamily. Sugar transporter (TC 2.A.1.1) family.</text>
</comment>
<organism>
    <name type="scientific">Aspergillus flavus (strain ATCC 200026 / FGSC A1120 / IAM 13836 / NRRL 3357 / JCM 12722 / SRRC 167)</name>
    <dbReference type="NCBI Taxonomy" id="332952"/>
    <lineage>
        <taxon>Eukaryota</taxon>
        <taxon>Fungi</taxon>
        <taxon>Dikarya</taxon>
        <taxon>Ascomycota</taxon>
        <taxon>Pezizomycotina</taxon>
        <taxon>Eurotiomycetes</taxon>
        <taxon>Eurotiomycetidae</taxon>
        <taxon>Eurotiales</taxon>
        <taxon>Aspergillaceae</taxon>
        <taxon>Aspergillus</taxon>
        <taxon>Aspergillus subgen. Circumdati</taxon>
    </lineage>
</organism>
<keyword id="KW-1003">Cell membrane</keyword>
<keyword id="KW-0472">Membrane</keyword>
<keyword id="KW-0672">Quinate metabolism</keyword>
<keyword id="KW-0812">Transmembrane</keyword>
<keyword id="KW-1133">Transmembrane helix</keyword>
<keyword id="KW-0813">Transport</keyword>
<keyword id="KW-0832">Ubl conjugation</keyword>
<feature type="chain" id="PRO_0000395714" description="Probable quinate permease">
    <location>
        <begin position="1"/>
        <end position="537"/>
    </location>
</feature>
<feature type="topological domain" description="Cytoplasmic" evidence="2">
    <location>
        <begin position="1"/>
        <end position="22"/>
    </location>
</feature>
<feature type="transmembrane region" description="Helical" evidence="2">
    <location>
        <begin position="23"/>
        <end position="43"/>
    </location>
</feature>
<feature type="topological domain" description="Extracellular" evidence="2">
    <location>
        <begin position="44"/>
        <end position="74"/>
    </location>
</feature>
<feature type="transmembrane region" description="Helical" evidence="2">
    <location>
        <begin position="75"/>
        <end position="95"/>
    </location>
</feature>
<feature type="topological domain" description="Cytoplasmic" evidence="2">
    <location>
        <begin position="96"/>
        <end position="97"/>
    </location>
</feature>
<feature type="transmembrane region" description="Helical" evidence="2">
    <location>
        <begin position="98"/>
        <end position="118"/>
    </location>
</feature>
<feature type="topological domain" description="Extracellular" evidence="2">
    <location>
        <begin position="119"/>
        <end position="130"/>
    </location>
</feature>
<feature type="transmembrane region" description="Helical" evidence="2">
    <location>
        <begin position="131"/>
        <end position="151"/>
    </location>
</feature>
<feature type="topological domain" description="Cytoplasmic" evidence="2">
    <location>
        <begin position="152"/>
        <end position="159"/>
    </location>
</feature>
<feature type="transmembrane region" description="Helical" evidence="2">
    <location>
        <begin position="160"/>
        <end position="180"/>
    </location>
</feature>
<feature type="topological domain" description="Extracellular" evidence="2">
    <location>
        <begin position="181"/>
        <end position="193"/>
    </location>
</feature>
<feature type="transmembrane region" description="Helical" evidence="2">
    <location>
        <begin position="194"/>
        <end position="214"/>
    </location>
</feature>
<feature type="topological domain" description="Cytoplasmic" evidence="2">
    <location>
        <begin position="215"/>
        <end position="285"/>
    </location>
</feature>
<feature type="transmembrane region" description="Helical" evidence="2">
    <location>
        <begin position="286"/>
        <end position="306"/>
    </location>
</feature>
<feature type="topological domain" description="Extracellular" evidence="2">
    <location>
        <begin position="307"/>
        <end position="325"/>
    </location>
</feature>
<feature type="transmembrane region" description="Helical" evidence="2">
    <location>
        <begin position="326"/>
        <end position="346"/>
    </location>
</feature>
<feature type="topological domain" description="Cytoplasmic" evidence="2">
    <location>
        <begin position="347"/>
        <end position="352"/>
    </location>
</feature>
<feature type="transmembrane region" description="Helical" evidence="2">
    <location>
        <begin position="353"/>
        <end position="373"/>
    </location>
</feature>
<feature type="topological domain" description="Extracellular" evidence="2">
    <location>
        <begin position="374"/>
        <end position="387"/>
    </location>
</feature>
<feature type="transmembrane region" description="Helical" evidence="2">
    <location>
        <begin position="388"/>
        <end position="408"/>
    </location>
</feature>
<feature type="topological domain" description="Cytoplasmic" evidence="2">
    <location>
        <begin position="409"/>
        <end position="456"/>
    </location>
</feature>
<feature type="transmembrane region" description="Helical" evidence="2">
    <location>
        <begin position="457"/>
        <end position="477"/>
    </location>
</feature>
<feature type="topological domain" description="Extracellular" evidence="2">
    <location>
        <begin position="478"/>
        <end position="537"/>
    </location>
</feature>